<organism>
    <name type="scientific">Emiliania huxleyi</name>
    <name type="common">Coccolithophore</name>
    <name type="synonym">Pontosphaera huxleyi</name>
    <dbReference type="NCBI Taxonomy" id="2903"/>
    <lineage>
        <taxon>Eukaryota</taxon>
        <taxon>Haptista</taxon>
        <taxon>Haptophyta</taxon>
        <taxon>Prymnesiophyceae</taxon>
        <taxon>Isochrysidales</taxon>
        <taxon>Noelaerhabdaceae</taxon>
        <taxon>Emiliania</taxon>
    </lineage>
</organism>
<sequence>XIAGSEEYGKHCFKGAVADAYLAKH</sequence>
<proteinExistence type="evidence at protein level"/>
<comment type="function">
    <text evidence="1">Plays a key role in the nitrogen metabolism of microorganisms, animals and plants.</text>
</comment>
<comment type="catalytic activity">
    <reaction evidence="3">
        <text>L-glutamate + NH4(+) + ATP = L-glutamine + ADP + phosphate + H(+)</text>
        <dbReference type="Rhea" id="RHEA:16169"/>
        <dbReference type="ChEBI" id="CHEBI:15378"/>
        <dbReference type="ChEBI" id="CHEBI:28938"/>
        <dbReference type="ChEBI" id="CHEBI:29985"/>
        <dbReference type="ChEBI" id="CHEBI:30616"/>
        <dbReference type="ChEBI" id="CHEBI:43474"/>
        <dbReference type="ChEBI" id="CHEBI:58359"/>
        <dbReference type="ChEBI" id="CHEBI:456216"/>
        <dbReference type="EC" id="6.3.1.2"/>
    </reaction>
</comment>
<comment type="subunit">
    <text evidence="1">Homohexamer.</text>
</comment>
<comment type="subcellular location">
    <subcellularLocation>
        <location evidence="3">Plastid</location>
        <location evidence="3">Chloroplast</location>
    </subcellularLocation>
</comment>
<comment type="similarity">
    <text evidence="3">Belongs to the glutamine synthetase family.</text>
</comment>
<name>GLNA2_EMIHU</name>
<keyword id="KW-0067">ATP-binding</keyword>
<keyword id="KW-0150">Chloroplast</keyword>
<keyword id="KW-0903">Direct protein sequencing</keyword>
<keyword id="KW-0436">Ligase</keyword>
<keyword id="KW-0535">Nitrogen fixation</keyword>
<keyword id="KW-0547">Nucleotide-binding</keyword>
<keyword id="KW-0934">Plastid</keyword>
<reference evidence="3" key="1">
    <citation type="journal article" date="1997" name="Comp. Biochem. Physiol.">
        <title>Isoforms of glutamine synthetase in the marine coccolithophorid Emiliania huxleyi (Prymnesiophyceae).</title>
        <authorList>
            <person name="Maurin C."/>
            <person name="Le Gal Y."/>
        </authorList>
    </citation>
    <scope>PROTEIN SEQUENCE</scope>
    <scope>FUNCTION</scope>
    <scope>SUBUNIT</scope>
    <source>
        <strain evidence="1">CCAP 920/2 / F61</strain>
    </source>
</reference>
<dbReference type="EC" id="6.3.1.2"/>
<dbReference type="STRING" id="2903.P81643"/>
<dbReference type="GO" id="GO:0009507">
    <property type="term" value="C:chloroplast"/>
    <property type="evidence" value="ECO:0007669"/>
    <property type="project" value="UniProtKB-SubCell"/>
</dbReference>
<dbReference type="GO" id="GO:0005524">
    <property type="term" value="F:ATP binding"/>
    <property type="evidence" value="ECO:0007669"/>
    <property type="project" value="UniProtKB-KW"/>
</dbReference>
<dbReference type="GO" id="GO:0004356">
    <property type="term" value="F:glutamine synthetase activity"/>
    <property type="evidence" value="ECO:0007669"/>
    <property type="project" value="UniProtKB-EC"/>
</dbReference>
<protein>
    <recommendedName>
        <fullName>Glutamine synthetase 2 isozyme</fullName>
        <ecNumber>6.3.1.2</ecNumber>
    </recommendedName>
    <alternativeName>
        <fullName>Chloroplast GS2</fullName>
    </alternativeName>
    <alternativeName>
        <fullName>Glutamate--ammonia ligase</fullName>
    </alternativeName>
</protein>
<evidence type="ECO:0000269" key="1">
    <source ref="1"/>
</evidence>
<evidence type="ECO:0000303" key="2">
    <source ref="1"/>
</evidence>
<evidence type="ECO:0000305" key="3"/>
<feature type="chain" id="PRO_0000153172" description="Glutamine synthetase 2 isozyme">
    <location>
        <begin position="1"/>
        <end position="25" status="greater than"/>
    </location>
</feature>
<feature type="non-terminal residue" evidence="2">
    <location>
        <position position="25"/>
    </location>
</feature>
<accession>P81643</accession>